<gene>
    <name evidence="1" type="primary">pstB</name>
    <name type="ordered locus">TT_C1723</name>
</gene>
<dbReference type="EC" id="7.3.2.1" evidence="1"/>
<dbReference type="EMBL" id="AE017221">
    <property type="protein sequence ID" value="AAS82065.1"/>
    <property type="molecule type" value="Genomic_DNA"/>
</dbReference>
<dbReference type="RefSeq" id="WP_011174086.1">
    <property type="nucleotide sequence ID" value="NC_005835.1"/>
</dbReference>
<dbReference type="SMR" id="Q72GX5"/>
<dbReference type="KEGG" id="tth:TT_C1723"/>
<dbReference type="eggNOG" id="COG1117">
    <property type="taxonomic scope" value="Bacteria"/>
</dbReference>
<dbReference type="HOGENOM" id="CLU_000604_1_22_0"/>
<dbReference type="OrthoDB" id="30605at2"/>
<dbReference type="Proteomes" id="UP000000592">
    <property type="component" value="Chromosome"/>
</dbReference>
<dbReference type="GO" id="GO:0005886">
    <property type="term" value="C:plasma membrane"/>
    <property type="evidence" value="ECO:0007669"/>
    <property type="project" value="UniProtKB-SubCell"/>
</dbReference>
<dbReference type="GO" id="GO:0005524">
    <property type="term" value="F:ATP binding"/>
    <property type="evidence" value="ECO:0007669"/>
    <property type="project" value="UniProtKB-KW"/>
</dbReference>
<dbReference type="GO" id="GO:0016887">
    <property type="term" value="F:ATP hydrolysis activity"/>
    <property type="evidence" value="ECO:0007669"/>
    <property type="project" value="InterPro"/>
</dbReference>
<dbReference type="GO" id="GO:0015415">
    <property type="term" value="F:ATPase-coupled phosphate ion transmembrane transporter activity"/>
    <property type="evidence" value="ECO:0007669"/>
    <property type="project" value="UniProtKB-EC"/>
</dbReference>
<dbReference type="GO" id="GO:0035435">
    <property type="term" value="P:phosphate ion transmembrane transport"/>
    <property type="evidence" value="ECO:0007669"/>
    <property type="project" value="InterPro"/>
</dbReference>
<dbReference type="CDD" id="cd03260">
    <property type="entry name" value="ABC_PstB_phosphate_transporter"/>
    <property type="match status" value="1"/>
</dbReference>
<dbReference type="Gene3D" id="3.40.50.300">
    <property type="entry name" value="P-loop containing nucleotide triphosphate hydrolases"/>
    <property type="match status" value="1"/>
</dbReference>
<dbReference type="InterPro" id="IPR003593">
    <property type="entry name" value="AAA+_ATPase"/>
</dbReference>
<dbReference type="InterPro" id="IPR003439">
    <property type="entry name" value="ABC_transporter-like_ATP-bd"/>
</dbReference>
<dbReference type="InterPro" id="IPR017871">
    <property type="entry name" value="ABC_transporter-like_CS"/>
</dbReference>
<dbReference type="InterPro" id="IPR027417">
    <property type="entry name" value="P-loop_NTPase"/>
</dbReference>
<dbReference type="InterPro" id="IPR005670">
    <property type="entry name" value="PstB-like"/>
</dbReference>
<dbReference type="NCBIfam" id="TIGR00972">
    <property type="entry name" value="3a0107s01c2"/>
    <property type="match status" value="1"/>
</dbReference>
<dbReference type="PANTHER" id="PTHR43423">
    <property type="entry name" value="ABC TRANSPORTER I FAMILY MEMBER 17"/>
    <property type="match status" value="1"/>
</dbReference>
<dbReference type="PANTHER" id="PTHR43423:SF1">
    <property type="entry name" value="ABC TRANSPORTER I FAMILY MEMBER 17"/>
    <property type="match status" value="1"/>
</dbReference>
<dbReference type="Pfam" id="PF00005">
    <property type="entry name" value="ABC_tran"/>
    <property type="match status" value="1"/>
</dbReference>
<dbReference type="SMART" id="SM00382">
    <property type="entry name" value="AAA"/>
    <property type="match status" value="1"/>
</dbReference>
<dbReference type="SUPFAM" id="SSF52540">
    <property type="entry name" value="P-loop containing nucleoside triphosphate hydrolases"/>
    <property type="match status" value="1"/>
</dbReference>
<dbReference type="PROSITE" id="PS00211">
    <property type="entry name" value="ABC_TRANSPORTER_1"/>
    <property type="match status" value="1"/>
</dbReference>
<dbReference type="PROSITE" id="PS50893">
    <property type="entry name" value="ABC_TRANSPORTER_2"/>
    <property type="match status" value="1"/>
</dbReference>
<dbReference type="PROSITE" id="PS51238">
    <property type="entry name" value="PSTB"/>
    <property type="match status" value="1"/>
</dbReference>
<reference key="1">
    <citation type="journal article" date="2004" name="Nat. Biotechnol.">
        <title>The genome sequence of the extreme thermophile Thermus thermophilus.</title>
        <authorList>
            <person name="Henne A."/>
            <person name="Brueggemann H."/>
            <person name="Raasch C."/>
            <person name="Wiezer A."/>
            <person name="Hartsch T."/>
            <person name="Liesegang H."/>
            <person name="Johann A."/>
            <person name="Lienard T."/>
            <person name="Gohl O."/>
            <person name="Martinez-Arias R."/>
            <person name="Jacobi C."/>
            <person name="Starkuviene V."/>
            <person name="Schlenczeck S."/>
            <person name="Dencker S."/>
            <person name="Huber R."/>
            <person name="Klenk H.-P."/>
            <person name="Kramer W."/>
            <person name="Merkl R."/>
            <person name="Gottschalk G."/>
            <person name="Fritz H.-J."/>
        </authorList>
    </citation>
    <scope>NUCLEOTIDE SEQUENCE [LARGE SCALE GENOMIC DNA]</scope>
    <source>
        <strain>ATCC BAA-163 / DSM 7039 / HB27</strain>
    </source>
</reference>
<proteinExistence type="inferred from homology"/>
<feature type="chain" id="PRO_0000092919" description="Phosphate import ATP-binding protein PstB">
    <location>
        <begin position="1"/>
        <end position="271"/>
    </location>
</feature>
<feature type="domain" description="ABC transporter" evidence="1">
    <location>
        <begin position="25"/>
        <end position="266"/>
    </location>
</feature>
<feature type="binding site" evidence="1">
    <location>
        <begin position="57"/>
        <end position="64"/>
    </location>
    <ligand>
        <name>ATP</name>
        <dbReference type="ChEBI" id="CHEBI:30616"/>
    </ligand>
</feature>
<accession>Q72GX5</accession>
<comment type="function">
    <text evidence="1">Part of the ABC transporter complex PstSACB involved in phosphate import. Responsible for energy coupling to the transport system.</text>
</comment>
<comment type="catalytic activity">
    <reaction evidence="1">
        <text>phosphate(out) + ATP + H2O = ADP + 2 phosphate(in) + H(+)</text>
        <dbReference type="Rhea" id="RHEA:24440"/>
        <dbReference type="ChEBI" id="CHEBI:15377"/>
        <dbReference type="ChEBI" id="CHEBI:15378"/>
        <dbReference type="ChEBI" id="CHEBI:30616"/>
        <dbReference type="ChEBI" id="CHEBI:43474"/>
        <dbReference type="ChEBI" id="CHEBI:456216"/>
        <dbReference type="EC" id="7.3.2.1"/>
    </reaction>
</comment>
<comment type="subunit">
    <text evidence="1">The complex is composed of two ATP-binding proteins (PstB), two transmembrane proteins (PstC and PstA) and a solute-binding protein (PstS).</text>
</comment>
<comment type="subcellular location">
    <subcellularLocation>
        <location evidence="1">Cell inner membrane</location>
        <topology evidence="1">Peripheral membrane protein</topology>
    </subcellularLocation>
</comment>
<comment type="similarity">
    <text evidence="1">Belongs to the ABC transporter superfamily. Phosphate importer (TC 3.A.1.7) family.</text>
</comment>
<sequence>MVSLEQLREHETVRTDPVPESQALVDVRQLSLWYGTKQALYDISVRFPKNQVTAIIGPSGCGKSTLLRSLNRMNDLVPGVRVKGEVLYEGVNIYDPRVDPVAVRRHIGMVFQKPNPFPKTIFENVAFGLRLMGVKGSELEDRVVEALKRAALWEEVKDRFKKESGLRLSGGQQQRLCIARAIAVEPPLLLMDEPTSALDPIATQAIEDLILELKERYTVVIVTHNMQQAARVSDRTLFMHLGVLVEEGPTEVIFTKPKHPYTEAYITGRFG</sequence>
<evidence type="ECO:0000255" key="1">
    <source>
        <dbReference type="HAMAP-Rule" id="MF_01702"/>
    </source>
</evidence>
<protein>
    <recommendedName>
        <fullName evidence="1">Phosphate import ATP-binding protein PstB</fullName>
        <ecNumber evidence="1">7.3.2.1</ecNumber>
    </recommendedName>
    <alternativeName>
        <fullName evidence="1">ABC phosphate transporter</fullName>
    </alternativeName>
    <alternativeName>
        <fullName evidence="1">Phosphate-transporting ATPase</fullName>
    </alternativeName>
</protein>
<keyword id="KW-0067">ATP-binding</keyword>
<keyword id="KW-0997">Cell inner membrane</keyword>
<keyword id="KW-1003">Cell membrane</keyword>
<keyword id="KW-0472">Membrane</keyword>
<keyword id="KW-0547">Nucleotide-binding</keyword>
<keyword id="KW-0592">Phosphate transport</keyword>
<keyword id="KW-1278">Translocase</keyword>
<keyword id="KW-0813">Transport</keyword>
<name>PSTB_THET2</name>
<organism>
    <name type="scientific">Thermus thermophilus (strain ATCC BAA-163 / DSM 7039 / HB27)</name>
    <dbReference type="NCBI Taxonomy" id="262724"/>
    <lineage>
        <taxon>Bacteria</taxon>
        <taxon>Thermotogati</taxon>
        <taxon>Deinococcota</taxon>
        <taxon>Deinococci</taxon>
        <taxon>Thermales</taxon>
        <taxon>Thermaceae</taxon>
        <taxon>Thermus</taxon>
    </lineage>
</organism>